<gene>
    <name evidence="1" type="primary">citS</name>
    <name evidence="4" type="synonym">citC</name>
    <name type="ordered locus">STY0066</name>
    <name type="ordered locus">t0059</name>
</gene>
<comment type="function">
    <text evidence="1">Secondary active transporter that catalyzes the uptake of citrate across the membrane with the concomitant uptake of sodium.</text>
</comment>
<comment type="catalytic activity">
    <reaction evidence="1">
        <text>citrate(out) + 2 Na(+)(out) = citrate(in) + 2 Na(+)(in)</text>
        <dbReference type="Rhea" id="RHEA:79471"/>
        <dbReference type="ChEBI" id="CHEBI:16947"/>
        <dbReference type="ChEBI" id="CHEBI:29101"/>
    </reaction>
    <physiologicalReaction direction="left-to-right" evidence="1">
        <dbReference type="Rhea" id="RHEA:79472"/>
    </physiologicalReaction>
</comment>
<comment type="subunit">
    <text evidence="1">Homodimer.</text>
</comment>
<comment type="subcellular location">
    <subcellularLocation>
        <location evidence="1">Cell inner membrane</location>
        <topology evidence="1">Multi-pass membrane protein</topology>
    </subcellularLocation>
</comment>
<comment type="similarity">
    <text evidence="3">Belongs to the 2-hydroxycarboxylate transporter (2-HCT) (TC 2.A.24) family.</text>
</comment>
<reference key="1">
    <citation type="journal article" date="2001" name="Nature">
        <title>Complete genome sequence of a multiple drug resistant Salmonella enterica serovar Typhi CT18.</title>
        <authorList>
            <person name="Parkhill J."/>
            <person name="Dougan G."/>
            <person name="James K.D."/>
            <person name="Thomson N.R."/>
            <person name="Pickard D."/>
            <person name="Wain J."/>
            <person name="Churcher C.M."/>
            <person name="Mungall K.L."/>
            <person name="Bentley S.D."/>
            <person name="Holden M.T.G."/>
            <person name="Sebaihia M."/>
            <person name="Baker S."/>
            <person name="Basham D."/>
            <person name="Brooks K."/>
            <person name="Chillingworth T."/>
            <person name="Connerton P."/>
            <person name="Cronin A."/>
            <person name="Davis P."/>
            <person name="Davies R.M."/>
            <person name="Dowd L."/>
            <person name="White N."/>
            <person name="Farrar J."/>
            <person name="Feltwell T."/>
            <person name="Hamlin N."/>
            <person name="Haque A."/>
            <person name="Hien T.T."/>
            <person name="Holroyd S."/>
            <person name="Jagels K."/>
            <person name="Krogh A."/>
            <person name="Larsen T.S."/>
            <person name="Leather S."/>
            <person name="Moule S."/>
            <person name="O'Gaora P."/>
            <person name="Parry C."/>
            <person name="Quail M.A."/>
            <person name="Rutherford K.M."/>
            <person name="Simmonds M."/>
            <person name="Skelton J."/>
            <person name="Stevens K."/>
            <person name="Whitehead S."/>
            <person name="Barrell B.G."/>
        </authorList>
    </citation>
    <scope>NUCLEOTIDE SEQUENCE [LARGE SCALE GENOMIC DNA]</scope>
    <source>
        <strain>CT18</strain>
    </source>
</reference>
<reference key="2">
    <citation type="journal article" date="2003" name="J. Bacteriol.">
        <title>Comparative genomics of Salmonella enterica serovar Typhi strains Ty2 and CT18.</title>
        <authorList>
            <person name="Deng W."/>
            <person name="Liou S.-R."/>
            <person name="Plunkett G. III"/>
            <person name="Mayhew G.F."/>
            <person name="Rose D.J."/>
            <person name="Burland V."/>
            <person name="Kodoyianni V."/>
            <person name="Schwartz D.C."/>
            <person name="Blattner F.R."/>
        </authorList>
    </citation>
    <scope>NUCLEOTIDE SEQUENCE [LARGE SCALE GENOMIC DNA]</scope>
    <source>
        <strain>ATCC 700931 / Ty2</strain>
    </source>
</reference>
<keyword id="KW-0997">Cell inner membrane</keyword>
<keyword id="KW-1003">Cell membrane</keyword>
<keyword id="KW-0163">Citrate utilization</keyword>
<keyword id="KW-0406">Ion transport</keyword>
<keyword id="KW-0472">Membrane</keyword>
<keyword id="KW-0479">Metal-binding</keyword>
<keyword id="KW-0915">Sodium</keyword>
<keyword id="KW-0739">Sodium transport</keyword>
<keyword id="KW-0769">Symport</keyword>
<keyword id="KW-0812">Transmembrane</keyword>
<keyword id="KW-1133">Transmembrane helix</keyword>
<keyword id="KW-0813">Transport</keyword>
<dbReference type="EMBL" id="AL513382">
    <property type="protein sequence ID" value="CAD01212.1"/>
    <property type="molecule type" value="Genomic_DNA"/>
</dbReference>
<dbReference type="EMBL" id="AE014613">
    <property type="protein sequence ID" value="AAO67792.1"/>
    <property type="molecule type" value="Genomic_DNA"/>
</dbReference>
<dbReference type="PIR" id="AD0509">
    <property type="entry name" value="AD0509"/>
</dbReference>
<dbReference type="RefSeq" id="NP_454668.1">
    <property type="nucleotide sequence ID" value="NC_003198.1"/>
</dbReference>
<dbReference type="RefSeq" id="WP_000183602.1">
    <property type="nucleotide sequence ID" value="NZ_WSUR01000028.1"/>
</dbReference>
<dbReference type="SMR" id="P0A2F9"/>
<dbReference type="STRING" id="220341.gene:17584114"/>
<dbReference type="TCDB" id="2.A.24.1.2">
    <property type="family name" value="the 2-hydroxycarboxylate transporter (2-hct) family"/>
</dbReference>
<dbReference type="KEGG" id="stt:t0059"/>
<dbReference type="KEGG" id="sty:STY0066"/>
<dbReference type="PATRIC" id="fig|220341.7.peg.66"/>
<dbReference type="eggNOG" id="COG3493">
    <property type="taxonomic scope" value="Bacteria"/>
</dbReference>
<dbReference type="HOGENOM" id="CLU_041211_0_1_6"/>
<dbReference type="OMA" id="CMANMGG"/>
<dbReference type="OrthoDB" id="8584824at2"/>
<dbReference type="Proteomes" id="UP000000541">
    <property type="component" value="Chromosome"/>
</dbReference>
<dbReference type="Proteomes" id="UP000002670">
    <property type="component" value="Chromosome"/>
</dbReference>
<dbReference type="GO" id="GO:0005886">
    <property type="term" value="C:plasma membrane"/>
    <property type="evidence" value="ECO:0007669"/>
    <property type="project" value="UniProtKB-SubCell"/>
</dbReference>
<dbReference type="GO" id="GO:0046872">
    <property type="term" value="F:metal ion binding"/>
    <property type="evidence" value="ECO:0007669"/>
    <property type="project" value="UniProtKB-KW"/>
</dbReference>
<dbReference type="GO" id="GO:0008514">
    <property type="term" value="F:organic anion transmembrane transporter activity"/>
    <property type="evidence" value="ECO:0007669"/>
    <property type="project" value="InterPro"/>
</dbReference>
<dbReference type="GO" id="GO:0015293">
    <property type="term" value="F:symporter activity"/>
    <property type="evidence" value="ECO:0007669"/>
    <property type="project" value="UniProtKB-KW"/>
</dbReference>
<dbReference type="GO" id="GO:0006101">
    <property type="term" value="P:citrate metabolic process"/>
    <property type="evidence" value="ECO:0007669"/>
    <property type="project" value="UniProtKB-KW"/>
</dbReference>
<dbReference type="GO" id="GO:0006814">
    <property type="term" value="P:sodium ion transport"/>
    <property type="evidence" value="ECO:0007669"/>
    <property type="project" value="UniProtKB-KW"/>
</dbReference>
<dbReference type="InterPro" id="IPR018025">
    <property type="entry name" value="2-OHcarbox_trans_Prot/Firm"/>
</dbReference>
<dbReference type="InterPro" id="IPR004679">
    <property type="entry name" value="2-OHcarboxylate_transport"/>
</dbReference>
<dbReference type="NCBIfam" id="TIGR00783">
    <property type="entry name" value="ccs"/>
    <property type="match status" value="1"/>
</dbReference>
<dbReference type="PANTHER" id="PTHR40033:SF1">
    <property type="entry name" value="CITRATE-SODIUM SYMPORTER"/>
    <property type="match status" value="1"/>
</dbReference>
<dbReference type="PANTHER" id="PTHR40033">
    <property type="entry name" value="NA(+)-MALATE SYMPORTER"/>
    <property type="match status" value="1"/>
</dbReference>
<dbReference type="Pfam" id="PF03390">
    <property type="entry name" value="2HCT"/>
    <property type="match status" value="1"/>
</dbReference>
<dbReference type="PIRSF" id="PIRSF005348">
    <property type="entry name" value="YxkH"/>
    <property type="match status" value="1"/>
</dbReference>
<proteinExistence type="inferred from homology"/>
<name>CITN_SALTI</name>
<evidence type="ECO:0000250" key="1">
    <source>
        <dbReference type="UniProtKB" id="P31602"/>
    </source>
</evidence>
<evidence type="ECO:0000255" key="2"/>
<evidence type="ECO:0000305" key="3"/>
<evidence type="ECO:0000312" key="4">
    <source>
        <dbReference type="EMBL" id="CAD01212.1"/>
    </source>
</evidence>
<protein>
    <recommendedName>
        <fullName evidence="1">Citrate/sodium symporter</fullName>
    </recommendedName>
    <alternativeName>
        <fullName evidence="1">Citrate transporter CitS</fullName>
    </alternativeName>
</protein>
<sequence length="446" mass="47622">MTNMTQASATEKKGASDLLRFKIFGMPLPLYAFALITLLLSHFYNAIPTDLVGGFALMFVMGAIFGEIGKRLPIFNKYIGGAPVMIFLVAAYFVYAGIFTQKEIDAISNVMDKSNFLNLFIAVLITGAILSVNRKLLLKSLLGYIPTILAGIVGASLFGIVIGLCFGIPVDRIMMLYVLPIMGGGNGAGAVPLSEIYHSVTGRSREEYYSTAIAILTIANIFAIIFAALLDMIGKKYTWLSGEGELVRKASFKTEDDEKAGQITHRETAVGMVLSTTCFLLAYVVAKKILPSIGGVSIHYFAWMVLIVAALNASGLCSPEIKAGAKRLSDFFSKQLLWVLMVGVGVCYTDLQEIIDALTFANVVIAAIIVVGAVVGAAIGGWLIGFYPIESSITAGLCMANRGGSGDLEVLSACNRMNLISYAQISSRLGGGIVLVIASIVFSMMV</sequence>
<feature type="chain" id="PRO_0000088759" description="Citrate/sodium symporter">
    <location>
        <begin position="1"/>
        <end position="446"/>
    </location>
</feature>
<feature type="transmembrane region" description="Helical" evidence="2">
    <location>
        <begin position="23"/>
        <end position="43"/>
    </location>
</feature>
<feature type="transmembrane region" description="Helical" evidence="2">
    <location>
        <begin position="46"/>
        <end position="66"/>
    </location>
</feature>
<feature type="transmembrane region" description="Helical" evidence="2">
    <location>
        <begin position="79"/>
        <end position="99"/>
    </location>
</feature>
<feature type="transmembrane region" description="Helical" evidence="2">
    <location>
        <begin position="110"/>
        <end position="130"/>
    </location>
</feature>
<feature type="transmembrane region" description="Helical" evidence="2">
    <location>
        <begin position="148"/>
        <end position="168"/>
    </location>
</feature>
<feature type="transmembrane region" description="Helical" evidence="2">
    <location>
        <begin position="213"/>
        <end position="233"/>
    </location>
</feature>
<feature type="transmembrane region" description="Helical" evidence="2">
    <location>
        <begin position="267"/>
        <end position="287"/>
    </location>
</feature>
<feature type="transmembrane region" description="Helical" evidence="2">
    <location>
        <begin position="289"/>
        <end position="309"/>
    </location>
</feature>
<feature type="transmembrane region" description="Helical" evidence="2">
    <location>
        <begin position="335"/>
        <end position="355"/>
    </location>
</feature>
<feature type="transmembrane region" description="Helical" evidence="2">
    <location>
        <begin position="364"/>
        <end position="384"/>
    </location>
</feature>
<feature type="transmembrane region" description="Helical" evidence="2">
    <location>
        <begin position="425"/>
        <end position="445"/>
    </location>
</feature>
<feature type="binding site" evidence="1">
    <location>
        <position position="181"/>
    </location>
    <ligand>
        <name>Na(+)</name>
        <dbReference type="ChEBI" id="CHEBI:29101"/>
    </ligand>
</feature>
<feature type="binding site" evidence="1">
    <location>
        <position position="183"/>
    </location>
    <ligand>
        <name>Na(+)</name>
        <dbReference type="ChEBI" id="CHEBI:29101"/>
    </ligand>
</feature>
<feature type="binding site" evidence="1">
    <location>
        <position position="186"/>
    </location>
    <ligand>
        <name>citrate</name>
        <dbReference type="ChEBI" id="CHEBI:16947"/>
    </ligand>
</feature>
<feature type="binding site" evidence="1">
    <location>
        <position position="187"/>
    </location>
    <ligand>
        <name>citrate</name>
        <dbReference type="ChEBI" id="CHEBI:16947"/>
    </ligand>
</feature>
<feature type="binding site" evidence="1">
    <location>
        <position position="399"/>
    </location>
    <ligand>
        <name>Na(+)</name>
        <dbReference type="ChEBI" id="CHEBI:29101"/>
    </ligand>
</feature>
<feature type="binding site" evidence="1">
    <location>
        <position position="401"/>
    </location>
    <ligand>
        <name>Na(+)</name>
        <dbReference type="ChEBI" id="CHEBI:29101"/>
    </ligand>
</feature>
<feature type="binding site" evidence="1">
    <location>
        <position position="402"/>
    </location>
    <ligand>
        <name>citrate</name>
        <dbReference type="ChEBI" id="CHEBI:16947"/>
    </ligand>
</feature>
<feature type="binding site" evidence="1">
    <location>
        <position position="404"/>
    </location>
    <ligand>
        <name>citrate</name>
        <dbReference type="ChEBI" id="CHEBI:16947"/>
    </ligand>
</feature>
<feature type="binding site" evidence="1">
    <location>
        <position position="405"/>
    </location>
    <ligand>
        <name>citrate</name>
        <dbReference type="ChEBI" id="CHEBI:16947"/>
    </ligand>
</feature>
<feature type="binding site" evidence="1">
    <location>
        <position position="428"/>
    </location>
    <ligand>
        <name>citrate</name>
        <dbReference type="ChEBI" id="CHEBI:16947"/>
    </ligand>
</feature>
<accession>P0A2F9</accession>
<accession>P31604</accession>
<organism>
    <name type="scientific">Salmonella typhi</name>
    <dbReference type="NCBI Taxonomy" id="90370"/>
    <lineage>
        <taxon>Bacteria</taxon>
        <taxon>Pseudomonadati</taxon>
        <taxon>Pseudomonadota</taxon>
        <taxon>Gammaproteobacteria</taxon>
        <taxon>Enterobacterales</taxon>
        <taxon>Enterobacteriaceae</taxon>
        <taxon>Salmonella</taxon>
    </lineage>
</organism>